<name>RS16_COXBU</name>
<dbReference type="EMBL" id="AE016828">
    <property type="protein sequence ID" value="AAO89996.2"/>
    <property type="status" value="ALT_INIT"/>
    <property type="molecule type" value="Genomic_DNA"/>
</dbReference>
<dbReference type="RefSeq" id="NP_819482.2">
    <property type="nucleotide sequence ID" value="NC_002971.3"/>
</dbReference>
<dbReference type="RefSeq" id="WP_010957580.1">
    <property type="nucleotide sequence ID" value="NC_002971.4"/>
</dbReference>
<dbReference type="SMR" id="Q83E83"/>
<dbReference type="STRING" id="227377.CBU_0445"/>
<dbReference type="EnsemblBacteria" id="AAO89996">
    <property type="protein sequence ID" value="AAO89996"/>
    <property type="gene ID" value="CBU_0445"/>
</dbReference>
<dbReference type="GeneID" id="1208329"/>
<dbReference type="KEGG" id="cbu:CBU_0445"/>
<dbReference type="PATRIC" id="fig|227377.7.peg.436"/>
<dbReference type="eggNOG" id="COG0228">
    <property type="taxonomic scope" value="Bacteria"/>
</dbReference>
<dbReference type="HOGENOM" id="CLU_100590_3_0_6"/>
<dbReference type="OrthoDB" id="9807878at2"/>
<dbReference type="Proteomes" id="UP000002671">
    <property type="component" value="Chromosome"/>
</dbReference>
<dbReference type="GO" id="GO:0005737">
    <property type="term" value="C:cytoplasm"/>
    <property type="evidence" value="ECO:0007669"/>
    <property type="project" value="UniProtKB-ARBA"/>
</dbReference>
<dbReference type="GO" id="GO:0015935">
    <property type="term" value="C:small ribosomal subunit"/>
    <property type="evidence" value="ECO:0000318"/>
    <property type="project" value="GO_Central"/>
</dbReference>
<dbReference type="GO" id="GO:0003735">
    <property type="term" value="F:structural constituent of ribosome"/>
    <property type="evidence" value="ECO:0000318"/>
    <property type="project" value="GO_Central"/>
</dbReference>
<dbReference type="GO" id="GO:0006412">
    <property type="term" value="P:translation"/>
    <property type="evidence" value="ECO:0007669"/>
    <property type="project" value="UniProtKB-UniRule"/>
</dbReference>
<dbReference type="Gene3D" id="3.30.1320.10">
    <property type="match status" value="1"/>
</dbReference>
<dbReference type="HAMAP" id="MF_00385">
    <property type="entry name" value="Ribosomal_bS16"/>
    <property type="match status" value="1"/>
</dbReference>
<dbReference type="InterPro" id="IPR000307">
    <property type="entry name" value="Ribosomal_bS16"/>
</dbReference>
<dbReference type="InterPro" id="IPR023803">
    <property type="entry name" value="Ribosomal_bS16_dom_sf"/>
</dbReference>
<dbReference type="NCBIfam" id="TIGR00002">
    <property type="entry name" value="S16"/>
    <property type="match status" value="1"/>
</dbReference>
<dbReference type="PANTHER" id="PTHR12919">
    <property type="entry name" value="30S RIBOSOMAL PROTEIN S16"/>
    <property type="match status" value="1"/>
</dbReference>
<dbReference type="PANTHER" id="PTHR12919:SF20">
    <property type="entry name" value="SMALL RIBOSOMAL SUBUNIT PROTEIN BS16M"/>
    <property type="match status" value="1"/>
</dbReference>
<dbReference type="Pfam" id="PF00886">
    <property type="entry name" value="Ribosomal_S16"/>
    <property type="match status" value="1"/>
</dbReference>
<dbReference type="SUPFAM" id="SSF54565">
    <property type="entry name" value="Ribosomal protein S16"/>
    <property type="match status" value="1"/>
</dbReference>
<proteinExistence type="inferred from homology"/>
<comment type="similarity">
    <text evidence="1">Belongs to the bacterial ribosomal protein bS16 family.</text>
</comment>
<comment type="sequence caution" evidence="3">
    <conflict type="erroneous initiation">
        <sequence resource="EMBL-CDS" id="AAO89996"/>
    </conflict>
</comment>
<organism>
    <name type="scientific">Coxiella burnetii (strain RSA 493 / Nine Mile phase I)</name>
    <dbReference type="NCBI Taxonomy" id="227377"/>
    <lineage>
        <taxon>Bacteria</taxon>
        <taxon>Pseudomonadati</taxon>
        <taxon>Pseudomonadota</taxon>
        <taxon>Gammaproteobacteria</taxon>
        <taxon>Legionellales</taxon>
        <taxon>Coxiellaceae</taxon>
        <taxon>Coxiella</taxon>
    </lineage>
</organism>
<reference key="1">
    <citation type="journal article" date="2003" name="Proc. Natl. Acad. Sci. U.S.A.">
        <title>Complete genome sequence of the Q-fever pathogen, Coxiella burnetii.</title>
        <authorList>
            <person name="Seshadri R."/>
            <person name="Paulsen I.T."/>
            <person name="Eisen J.A."/>
            <person name="Read T.D."/>
            <person name="Nelson K.E."/>
            <person name="Nelson W.C."/>
            <person name="Ward N.L."/>
            <person name="Tettelin H."/>
            <person name="Davidsen T.M."/>
            <person name="Beanan M.J."/>
            <person name="DeBoy R.T."/>
            <person name="Daugherty S.C."/>
            <person name="Brinkac L.M."/>
            <person name="Madupu R."/>
            <person name="Dodson R.J."/>
            <person name="Khouri H.M."/>
            <person name="Lee K.H."/>
            <person name="Carty H.A."/>
            <person name="Scanlan D."/>
            <person name="Heinzen R.A."/>
            <person name="Thompson H.A."/>
            <person name="Samuel J.E."/>
            <person name="Fraser C.M."/>
            <person name="Heidelberg J.F."/>
        </authorList>
    </citation>
    <scope>NUCLEOTIDE SEQUENCE [LARGE SCALE GENOMIC DNA]</scope>
    <source>
        <strain>RSA 493 / Nine Mile phase I</strain>
    </source>
</reference>
<protein>
    <recommendedName>
        <fullName evidence="1">Small ribosomal subunit protein bS16</fullName>
    </recommendedName>
    <alternativeName>
        <fullName evidence="3">30S ribosomal protein S16</fullName>
    </alternativeName>
</protein>
<gene>
    <name evidence="1" type="primary">rpsP</name>
    <name type="ordered locus">CBU_0445</name>
</gene>
<feature type="chain" id="PRO_0000167181" description="Small ribosomal subunit protein bS16">
    <location>
        <begin position="1"/>
        <end position="137"/>
    </location>
</feature>
<feature type="region of interest" description="Disordered" evidence="2">
    <location>
        <begin position="80"/>
        <end position="137"/>
    </location>
</feature>
<feature type="compositionally biased region" description="Basic and acidic residues" evidence="2">
    <location>
        <begin position="80"/>
        <end position="99"/>
    </location>
</feature>
<feature type="compositionally biased region" description="Basic and acidic residues" evidence="2">
    <location>
        <begin position="111"/>
        <end position="125"/>
    </location>
</feature>
<feature type="compositionally biased region" description="Low complexity" evidence="2">
    <location>
        <begin position="126"/>
        <end position="137"/>
    </location>
</feature>
<evidence type="ECO:0000255" key="1">
    <source>
        <dbReference type="HAMAP-Rule" id="MF_00385"/>
    </source>
</evidence>
<evidence type="ECO:0000256" key="2">
    <source>
        <dbReference type="SAM" id="MobiDB-lite"/>
    </source>
</evidence>
<evidence type="ECO:0000305" key="3"/>
<accession>Q83E83</accession>
<keyword id="KW-1185">Reference proteome</keyword>
<keyword id="KW-0687">Ribonucleoprotein</keyword>
<keyword id="KW-0689">Ribosomal protein</keyword>
<sequence>MVVIRLARGGSKKNPFYHIVVADRRKPRDGRFIERVGYYNPMARGQDIRLQLEKERISHWLNQGAQTSLRVKHLIKKLEKSPEEAQKGGMRKGEFKRLQAEQAAKAQKKAVATEEPKAEEAKEAPPAESQAAEGKEE</sequence>